<organism evidence="16 19">
    <name type="scientific">Drosophila melanogaster</name>
    <name type="common">Fruit fly</name>
    <dbReference type="NCBI Taxonomy" id="7227"/>
    <lineage>
        <taxon>Eukaryota</taxon>
        <taxon>Metazoa</taxon>
        <taxon>Ecdysozoa</taxon>
        <taxon>Arthropoda</taxon>
        <taxon>Hexapoda</taxon>
        <taxon>Insecta</taxon>
        <taxon>Pterygota</taxon>
        <taxon>Neoptera</taxon>
        <taxon>Endopterygota</taxon>
        <taxon>Diptera</taxon>
        <taxon>Brachycera</taxon>
        <taxon>Muscomorpha</taxon>
        <taxon>Ephydroidea</taxon>
        <taxon>Drosophilidae</taxon>
        <taxon>Drosophila</taxon>
        <taxon>Sophophora</taxon>
    </lineage>
</organism>
<feature type="chain" id="PRO_0000459388" description="SH2/SH3 adapter protein dreadlocks">
    <location>
        <begin position="1"/>
        <end position="548"/>
    </location>
</feature>
<feature type="domain" description="SH3 1" evidence="2">
    <location>
        <begin position="150"/>
        <end position="209"/>
    </location>
</feature>
<feature type="domain" description="SH3 2" evidence="2">
    <location>
        <begin position="252"/>
        <end position="311"/>
    </location>
</feature>
<feature type="domain" description="SH3 3" evidence="2">
    <location>
        <begin position="324"/>
        <end position="386"/>
    </location>
</feature>
<feature type="domain" description="SH2" evidence="1">
    <location>
        <begin position="448"/>
        <end position="542"/>
    </location>
</feature>
<feature type="region of interest" description="Disordered" evidence="3">
    <location>
        <begin position="12"/>
        <end position="37"/>
    </location>
</feature>
<feature type="region of interest" description="Disordered" evidence="3">
    <location>
        <begin position="57"/>
        <end position="92"/>
    </location>
</feature>
<feature type="region of interest" description="Disordered" evidence="3">
    <location>
        <begin position="113"/>
        <end position="146"/>
    </location>
</feature>
<feature type="region of interest" description="Disordered" evidence="3">
    <location>
        <begin position="219"/>
        <end position="247"/>
    </location>
</feature>
<feature type="region of interest" description="Disordered" evidence="3">
    <location>
        <begin position="398"/>
        <end position="442"/>
    </location>
</feature>
<feature type="compositionally biased region" description="Low complexity" evidence="3">
    <location>
        <begin position="20"/>
        <end position="37"/>
    </location>
</feature>
<feature type="compositionally biased region" description="Gly residues" evidence="3">
    <location>
        <begin position="113"/>
        <end position="122"/>
    </location>
</feature>
<feature type="compositionally biased region" description="Low complexity" evidence="3">
    <location>
        <begin position="123"/>
        <end position="135"/>
    </location>
</feature>
<feature type="compositionally biased region" description="Polar residues" evidence="3">
    <location>
        <begin position="227"/>
        <end position="242"/>
    </location>
</feature>
<feature type="compositionally biased region" description="Gly residues" evidence="3">
    <location>
        <begin position="401"/>
        <end position="417"/>
    </location>
</feature>
<feature type="splice variant" id="VSP_062137" description="In isoform A.">
    <location>
        <begin position="1"/>
        <end position="138"/>
    </location>
</feature>
<feature type="mutagenesis site" description="Probably disrupts the binding pocket of SH3 domain 1. No effect on interaction with Pak. Unable to rescue R cell projection phenotype in loss of function mutants; when associated with Q-336." evidence="5 12">
    <original>W</original>
    <variation>K</variation>
    <location>
        <position position="186"/>
    </location>
</feature>
<feature type="mutagenesis site" description="Probably disrupts the binding pocket of SH3 domain 2. Disrupts interaction with Pak. Unable to rescue R cell projection phenotype in loss of function mutants." evidence="5 12">
    <original>W</original>
    <variation>K</variation>
    <location>
        <position position="289"/>
    </location>
</feature>
<feature type="mutagenesis site" description="Probably disrupts the binding pocket of SH3 domain 3. No effect on interaction with Pak. Unable to rescue R cell projection phenotype in loss of function mutants; when associated with Q-336." evidence="5 12">
    <original>W</original>
    <variation>K</variation>
    <location>
        <position position="363"/>
    </location>
</feature>
<feature type="mutagenesis site" description="Probably disrupts SH2 phosphotyrosine binding pocket. Unable to rescue R cell projection phenotype in loss of function mutants; when associated with K-48 or K-225." evidence="12">
    <original>R</original>
    <variation>Q</variation>
    <location>
        <position position="474"/>
    </location>
</feature>
<feature type="sequence conflict" description="In Ref. 1; AAB05596." evidence="14" ref="1">
    <original>A</original>
    <variation>T</variation>
    <location>
        <position position="395"/>
    </location>
</feature>
<name>NCK_DROME</name>
<gene>
    <name evidence="18" type="primary">dock</name>
    <name evidence="16" type="synonym">2L19</name>
    <name evidence="16" type="synonym">dck</name>
    <name evidence="16" type="synonym">Dm0447</name>
    <name evidence="16" type="synonym">doc</name>
    <name evidence="16" type="synonym">Nck</name>
    <name evidence="18" type="ORF">CG3727</name>
</gene>
<reference evidence="15" key="1">
    <citation type="journal article" date="1996" name="Cell">
        <title>Drosophila photoreceptor axon guidance and targeting requires the dreadlocks SH2/SH3 adapter protein.</title>
        <authorList>
            <person name="Garrity P.A."/>
            <person name="Rao Y."/>
            <person name="Salecker I."/>
            <person name="McGlade J."/>
            <person name="Pawson T."/>
            <person name="Zipursky S.L."/>
        </authorList>
    </citation>
    <scope>NUCLEOTIDE SEQUENCE [MRNA] (ISOFORM A)</scope>
    <scope>FUNCTION</scope>
    <scope>SUBCELLULAR LOCATION</scope>
    <scope>DEVELOPMENTAL STAGE</scope>
    <scope>DOMAIN</scope>
    <scope>DISRUPTION PHENOTYPE</scope>
</reference>
<reference evidence="19" key="2">
    <citation type="journal article" date="2000" name="Science">
        <title>The genome sequence of Drosophila melanogaster.</title>
        <authorList>
            <person name="Adams M.D."/>
            <person name="Celniker S.E."/>
            <person name="Holt R.A."/>
            <person name="Evans C.A."/>
            <person name="Gocayne J.D."/>
            <person name="Amanatides P.G."/>
            <person name="Scherer S.E."/>
            <person name="Li P.W."/>
            <person name="Hoskins R.A."/>
            <person name="Galle R.F."/>
            <person name="George R.A."/>
            <person name="Lewis S.E."/>
            <person name="Richards S."/>
            <person name="Ashburner M."/>
            <person name="Henderson S.N."/>
            <person name="Sutton G.G."/>
            <person name="Wortman J.R."/>
            <person name="Yandell M.D."/>
            <person name="Zhang Q."/>
            <person name="Chen L.X."/>
            <person name="Brandon R.C."/>
            <person name="Rogers Y.-H.C."/>
            <person name="Blazej R.G."/>
            <person name="Champe M."/>
            <person name="Pfeiffer B.D."/>
            <person name="Wan K.H."/>
            <person name="Doyle C."/>
            <person name="Baxter E.G."/>
            <person name="Helt G."/>
            <person name="Nelson C.R."/>
            <person name="Miklos G.L.G."/>
            <person name="Abril J.F."/>
            <person name="Agbayani A."/>
            <person name="An H.-J."/>
            <person name="Andrews-Pfannkoch C."/>
            <person name="Baldwin D."/>
            <person name="Ballew R.M."/>
            <person name="Basu A."/>
            <person name="Baxendale J."/>
            <person name="Bayraktaroglu L."/>
            <person name="Beasley E.M."/>
            <person name="Beeson K.Y."/>
            <person name="Benos P.V."/>
            <person name="Berman B.P."/>
            <person name="Bhandari D."/>
            <person name="Bolshakov S."/>
            <person name="Borkova D."/>
            <person name="Botchan M.R."/>
            <person name="Bouck J."/>
            <person name="Brokstein P."/>
            <person name="Brottier P."/>
            <person name="Burtis K.C."/>
            <person name="Busam D.A."/>
            <person name="Butler H."/>
            <person name="Cadieu E."/>
            <person name="Center A."/>
            <person name="Chandra I."/>
            <person name="Cherry J.M."/>
            <person name="Cawley S."/>
            <person name="Dahlke C."/>
            <person name="Davenport L.B."/>
            <person name="Davies P."/>
            <person name="de Pablos B."/>
            <person name="Delcher A."/>
            <person name="Deng Z."/>
            <person name="Mays A.D."/>
            <person name="Dew I."/>
            <person name="Dietz S.M."/>
            <person name="Dodson K."/>
            <person name="Doup L.E."/>
            <person name="Downes M."/>
            <person name="Dugan-Rocha S."/>
            <person name="Dunkov B.C."/>
            <person name="Dunn P."/>
            <person name="Durbin K.J."/>
            <person name="Evangelista C.C."/>
            <person name="Ferraz C."/>
            <person name="Ferriera S."/>
            <person name="Fleischmann W."/>
            <person name="Fosler C."/>
            <person name="Gabrielian A.E."/>
            <person name="Garg N.S."/>
            <person name="Gelbart W.M."/>
            <person name="Glasser K."/>
            <person name="Glodek A."/>
            <person name="Gong F."/>
            <person name="Gorrell J.H."/>
            <person name="Gu Z."/>
            <person name="Guan P."/>
            <person name="Harris M."/>
            <person name="Harris N.L."/>
            <person name="Harvey D.A."/>
            <person name="Heiman T.J."/>
            <person name="Hernandez J.R."/>
            <person name="Houck J."/>
            <person name="Hostin D."/>
            <person name="Houston K.A."/>
            <person name="Howland T.J."/>
            <person name="Wei M.-H."/>
            <person name="Ibegwam C."/>
            <person name="Jalali M."/>
            <person name="Kalush F."/>
            <person name="Karpen G.H."/>
            <person name="Ke Z."/>
            <person name="Kennison J.A."/>
            <person name="Ketchum K.A."/>
            <person name="Kimmel B.E."/>
            <person name="Kodira C.D."/>
            <person name="Kraft C.L."/>
            <person name="Kravitz S."/>
            <person name="Kulp D."/>
            <person name="Lai Z."/>
            <person name="Lasko P."/>
            <person name="Lei Y."/>
            <person name="Levitsky A.A."/>
            <person name="Li J.H."/>
            <person name="Li Z."/>
            <person name="Liang Y."/>
            <person name="Lin X."/>
            <person name="Liu X."/>
            <person name="Mattei B."/>
            <person name="McIntosh T.C."/>
            <person name="McLeod M.P."/>
            <person name="McPherson D."/>
            <person name="Merkulov G."/>
            <person name="Milshina N.V."/>
            <person name="Mobarry C."/>
            <person name="Morris J."/>
            <person name="Moshrefi A."/>
            <person name="Mount S.M."/>
            <person name="Moy M."/>
            <person name="Murphy B."/>
            <person name="Murphy L."/>
            <person name="Muzny D.M."/>
            <person name="Nelson D.L."/>
            <person name="Nelson D.R."/>
            <person name="Nelson K.A."/>
            <person name="Nixon K."/>
            <person name="Nusskern D.R."/>
            <person name="Pacleb J.M."/>
            <person name="Palazzolo M."/>
            <person name="Pittman G.S."/>
            <person name="Pan S."/>
            <person name="Pollard J."/>
            <person name="Puri V."/>
            <person name="Reese M.G."/>
            <person name="Reinert K."/>
            <person name="Remington K."/>
            <person name="Saunders R.D.C."/>
            <person name="Scheeler F."/>
            <person name="Shen H."/>
            <person name="Shue B.C."/>
            <person name="Siden-Kiamos I."/>
            <person name="Simpson M."/>
            <person name="Skupski M.P."/>
            <person name="Smith T.J."/>
            <person name="Spier E."/>
            <person name="Spradling A.C."/>
            <person name="Stapleton M."/>
            <person name="Strong R."/>
            <person name="Sun E."/>
            <person name="Svirskas R."/>
            <person name="Tector C."/>
            <person name="Turner R."/>
            <person name="Venter E."/>
            <person name="Wang A.H."/>
            <person name="Wang X."/>
            <person name="Wang Z.-Y."/>
            <person name="Wassarman D.A."/>
            <person name="Weinstock G.M."/>
            <person name="Weissenbach J."/>
            <person name="Williams S.M."/>
            <person name="Woodage T."/>
            <person name="Worley K.C."/>
            <person name="Wu D."/>
            <person name="Yang S."/>
            <person name="Yao Q.A."/>
            <person name="Ye J."/>
            <person name="Yeh R.-F."/>
            <person name="Zaveri J.S."/>
            <person name="Zhan M."/>
            <person name="Zhang G."/>
            <person name="Zhao Q."/>
            <person name="Zheng L."/>
            <person name="Zheng X.H."/>
            <person name="Zhong F.N."/>
            <person name="Zhong W."/>
            <person name="Zhou X."/>
            <person name="Zhu S.C."/>
            <person name="Zhu X."/>
            <person name="Smith H.O."/>
            <person name="Gibbs R.A."/>
            <person name="Myers E.W."/>
            <person name="Rubin G.M."/>
            <person name="Venter J.C."/>
        </authorList>
    </citation>
    <scope>NUCLEOTIDE SEQUENCE [LARGE SCALE GENOMIC DNA]</scope>
    <source>
        <strain evidence="19">Berkeley</strain>
    </source>
</reference>
<reference evidence="19" key="3">
    <citation type="journal article" date="2002" name="Genome Biol.">
        <title>Annotation of the Drosophila melanogaster euchromatic genome: a systematic review.</title>
        <authorList>
            <person name="Misra S."/>
            <person name="Crosby M.A."/>
            <person name="Mungall C.J."/>
            <person name="Matthews B.B."/>
            <person name="Campbell K.S."/>
            <person name="Hradecky P."/>
            <person name="Huang Y."/>
            <person name="Kaminker J.S."/>
            <person name="Millburn G.H."/>
            <person name="Prochnik S.E."/>
            <person name="Smith C.D."/>
            <person name="Tupy J.L."/>
            <person name="Whitfield E.J."/>
            <person name="Bayraktaroglu L."/>
            <person name="Berman B.P."/>
            <person name="Bettencourt B.R."/>
            <person name="Celniker S.E."/>
            <person name="de Grey A.D.N.J."/>
            <person name="Drysdale R.A."/>
            <person name="Harris N.L."/>
            <person name="Richter J."/>
            <person name="Russo S."/>
            <person name="Schroeder A.J."/>
            <person name="Shu S.Q."/>
            <person name="Stapleton M."/>
            <person name="Yamada C."/>
            <person name="Ashburner M."/>
            <person name="Gelbart W.M."/>
            <person name="Rubin G.M."/>
            <person name="Lewis S.E."/>
        </authorList>
    </citation>
    <scope>GENOME REANNOTATION</scope>
    <source>
        <strain evidence="19">Berkeley</strain>
    </source>
</reference>
<reference evidence="17" key="4">
    <citation type="journal article" date="2002" name="Genome Biol.">
        <title>A Drosophila full-length cDNA resource.</title>
        <authorList>
            <person name="Stapleton M."/>
            <person name="Carlson J.W."/>
            <person name="Brokstein P."/>
            <person name="Yu C."/>
            <person name="Champe M."/>
            <person name="George R.A."/>
            <person name="Guarin H."/>
            <person name="Kronmiller B."/>
            <person name="Pacleb J.M."/>
            <person name="Park S."/>
            <person name="Wan K.H."/>
            <person name="Rubin G.M."/>
            <person name="Celniker S.E."/>
        </authorList>
    </citation>
    <scope>NUCLEOTIDE SEQUENCE [LARGE SCALE MRNA] (ISOFORM B)</scope>
    <source>
        <strain>Berkeley</strain>
        <tissue>Embryo</tissue>
    </source>
</reference>
<reference evidence="14" key="5">
    <citation type="journal article" date="1996" name="J. Biol. Chem.">
        <title>A Drosophila protein-tyrosine phosphatase associates with an adapter protein required for axonal guidance.</title>
        <authorList>
            <person name="Clemens J.C."/>
            <person name="Ursuliak Z."/>
            <person name="Clemens K.K."/>
            <person name="Price J.V."/>
            <person name="Dixon J.E."/>
        </authorList>
    </citation>
    <scope>INTERACTION WITH PTP61F</scope>
    <scope>DEVELOPMENTAL STAGE</scope>
</reference>
<reference evidence="14" key="6">
    <citation type="journal article" date="1998" name="Proc. Natl. Acad. Sci. U.S.A.">
        <title>Domain requirements for the Dock adapter protein in growth- cone signaling.</title>
        <authorList>
            <person name="Rao Y."/>
            <person name="Zipursky S.L."/>
        </authorList>
    </citation>
    <scope>FUNCTION</scope>
    <scope>DOMAIN</scope>
    <scope>DISRUPTION PHENOTYPE</scope>
    <scope>MUTAGENESIS OF TRP-186; TRP-289; TRP-363 AND ARG-474</scope>
</reference>
<reference evidence="14" key="7">
    <citation type="journal article" date="1999" name="Cell">
        <title>Pak functions downstream of Dock to regulate photoreceptor axon guidance in Drosophila.</title>
        <authorList>
            <person name="Hing H."/>
            <person name="Xiao J."/>
            <person name="Harden N."/>
            <person name="Lim L."/>
            <person name="Zipursky S.L."/>
        </authorList>
    </citation>
    <scope>FUNCTION</scope>
    <scope>INTERACTION WITH PAK</scope>
    <scope>SUBCELLULAR LOCATION</scope>
    <scope>DEVELOPMENTAL STAGE</scope>
    <scope>DOMAIN</scope>
    <scope>DISRUPTION PHENOTYPE</scope>
    <scope>MUTAGENESIS OF TRP-48; TRP-151 AND TRP-225</scope>
</reference>
<reference evidence="14" key="8">
    <citation type="journal article" date="1999" name="Development">
        <title>The Drosophila SH2-SH3 adapter protein Dock is expressed in embryonic axons and facilitates synapse formation by the RP3 motoneuron.</title>
        <authorList>
            <person name="Desai C.J."/>
            <person name="Garrity P.A."/>
            <person name="Keshishian H."/>
            <person name="Zipursky S.L."/>
            <person name="Zinn K."/>
        </authorList>
    </citation>
    <scope>FUNCTION</scope>
    <scope>SUBCELLULAR LOCATION</scope>
    <scope>DEVELOPMENTAL STAGE</scope>
    <scope>DISRUPTION PHENOTYPE</scope>
</reference>
<reference evidence="14" key="9">
    <citation type="journal article" date="2000" name="Cell">
        <title>Drosophila Dscam is an axon guidance receptor exhibiting extraordinary molecular diversity.</title>
        <authorList>
            <person name="Schmucker D."/>
            <person name="Clemens J.C."/>
            <person name="Shu H."/>
            <person name="Worby C.A."/>
            <person name="Xiao J."/>
            <person name="Muda M."/>
            <person name="Dixon J.E."/>
            <person name="Zipursky S.L."/>
        </authorList>
    </citation>
    <scope>FUNCTION</scope>
    <scope>INTERACTION WITH DSCAM1</scope>
    <scope>DOMAIN</scope>
    <scope>DISRUPTION PHENOTYPE</scope>
</reference>
<reference evidence="14" key="10">
    <citation type="journal article" date="2002" name="Biochem. J.">
        <title>Use of double-stranded RNA-mediated interference to determine the substrates of protein tyrosine kinases and phosphatases.</title>
        <authorList>
            <person name="Muda M."/>
            <person name="Worby C.A."/>
            <person name="Simonson-Leff N."/>
            <person name="Clemens J.C."/>
            <person name="Dixon J.E."/>
        </authorList>
    </citation>
    <scope>PHOSPHORYLATION</scope>
</reference>
<reference evidence="14" key="11">
    <citation type="journal article" date="2003" name="Science">
        <title>Axons guided by insulin receptor in Drosophila visual system.</title>
        <authorList>
            <person name="Song J."/>
            <person name="Wu L."/>
            <person name="Chen Z."/>
            <person name="Kohanski R.A."/>
            <person name="Pick L."/>
        </authorList>
    </citation>
    <scope>FUNCTION</scope>
    <scope>INTERACTION WITH INR</scope>
    <scope>DEVELOPMENTAL STAGE</scope>
    <scope>DOMAIN</scope>
</reference>
<reference evidence="14" key="12">
    <citation type="journal article" date="2011" name="Biochem. J.">
        <title>Dock/Nck facilitates PTP61F/PTP1B regulation of insulin signalling.</title>
        <authorList>
            <person name="Wu C.L."/>
            <person name="Buszard B."/>
            <person name="Teng C.H."/>
            <person name="Chen W.L."/>
            <person name="Warr C.G."/>
            <person name="Tiganis T."/>
            <person name="Meng T.C."/>
        </authorList>
    </citation>
    <scope>INTERACTION WITH PTP61F</scope>
</reference>
<proteinExistence type="evidence at protein level"/>
<comment type="function">
    <text evidence="4 5 6 8 10 12">Adapter protein that links cell surface receptor tyrosine phosphorylation to downstream signaling pathways and effectors, many of which are involved in regulation of the actin cytoskeleton (PubMed:8646773). Recruited by Dscam1/Down syndrome cell adhesion molecule homolog and InR/insulin-like receptor (PubMed:10892653, PubMed:12702880). Recruits Pak to membranes, probably when dock/dreadlocks is associated with activated receptors (PubMed:10399914). Required for guidance and targeting of photoreceptor (R cell) axon projections but not for axon outgrowth, differentiation or target induction in the developing eye (PubMed:10399914, PubMed:12702880, PubMed:8646773, PubMed:9482841). As part of a signaling pathway that involves the lbm/late bloomer protein, involved in synapse formation of the RP3 motorneuron at the muscle 7/6 cleft, probably by stimulating axon defasciculation from other SNb neurons (PubMed:10068645).</text>
</comment>
<comment type="subunit">
    <text evidence="5 6 8 9 11">Interacts (via SH2 and SH3 domains) with Dscam1 (via cytoplasmic domain); the interaction is direct and requires Dscam1 to be phosphorylated (PubMed:10892653). Interacts (via SH2 and SH3 domains) with InR/Insulin-like receptor (via C-terminal cytoplasmic region); the interaction requires InR kinase activity, probably for autophosphorylation stimulated by insulin signaling (PubMed:12702880). Interacts with Ptp61F (via C-terminus); this interaction is independent of insulin stimulation (PubMed:21707536, PubMed:8663600). Interacts (via SH3 domain 2) with Pak (via N-terminal PXXP motif) (PubMed:10399914).</text>
</comment>
<comment type="interaction">
    <interactant intactId="EBI-74727">
        <id>Q8IPW2</id>
    </interactant>
    <interactant intactId="EBI-74714">
        <id>Q9W0G1</id>
        <label>Ptp61F</label>
    </interactant>
    <organismsDiffer>false</organismsDiffer>
    <experiments>8</experiments>
</comment>
<comment type="interaction">
    <interactant intactId="EBI-74727">
        <id>Q8IPW2</id>
    </interactant>
    <interactant intactId="EBI-74797">
        <id>O44924</id>
        <label>robo1</label>
    </interactant>
    <organismsDiffer>false</organismsDiffer>
    <experiments>6</experiments>
</comment>
<comment type="subcellular location">
    <subcellularLocation>
        <location evidence="4">Perikaryon</location>
    </subcellularLocation>
    <subcellularLocation>
        <location evidence="4 5 10">Cell projection</location>
        <location evidence="4 5 10">Axon</location>
    </subcellularLocation>
    <subcellularLocation>
        <location evidence="4 5 10">Cell projection</location>
        <location evidence="4 5 10">Growth cone</location>
    </subcellularLocation>
    <text evidence="4">Highest concentration localized to the growth cones of neuronal cells.</text>
</comment>
<comment type="alternative products">
    <event type="alternative splicing"/>
    <isoform>
        <id>Q8IPW2-2</id>
        <name evidence="18">B</name>
        <name evidence="18">C</name>
        <name evidence="18">D</name>
        <sequence type="displayed"/>
    </isoform>
    <isoform>
        <id>Q8IPW2-1</id>
        <name evidence="18">A</name>
        <sequence type="described" ref="VSP_062137"/>
    </isoform>
</comment>
<comment type="developmental stage">
    <text evidence="4 5 8 10 11">Expressed in embryos, larvae and adults (at protein level) (PubMed:8646773). In late stage 16 embryos, expressed in most, if not all of the central nervous system (CNS), including longitudinal axon tracts and, posterior and anterior commissures (at protein level) (PubMed:10068645). In the peripheral nervous system of late stage 16 embryos expressed in the motor neurons that innervate the body wall muscles and most sensory neurons (PubMed:10068645). Highly expressed in the late stage 16 embryo body wall muscles where they attach to the epidermis, particularly in muscle fibers oriented longitudinally (PubMed:10068645). In the optic lobes of third instar larvae, strongly expressed in the lamina and medulla neuropils, corresponding to the growth cones and axons of R cells, and weakly expressed in R cell bodies and medulla neurons (at protein level) (PubMed:10399914, PubMed:8646773). This distribution matches that of its interaction partner Pak (PubMed:10399914). High levels of expression detected in embryos, pupae and adults but low levels in larvae (PubMed:8663600). Detected in 0-24 hour old embryos, larval eye/brain complexes and imaginal disks (PubMed:8646773). Expressed in the developing brain and ventral nerve cord in the central nervous system of stage 14 embryos (PubMed:8663600). Some embryonic CNS localized protein results from maternally contributed mRNA or protein (PubMed:10068645). In third-instar larvae, ubiquitously expressed but enriched in R cells of the eye-brain complex (PubMed:12702880).</text>
</comment>
<comment type="domain">
    <text evidence="5 6 8 10 12">Possesses 3 SH3 domains, which bind polyproline motifs, and 1 SH2 domain that binds phosphotyrosine (PubMed:8646773). The SH2 and SH3 domains are cooperatively involved in the binding of the cytoplasmic domains of Dscam1 and InR (PubMed:10892653, PubMed:12702880). SH3 domain 1 preferentially binds Dscam1 PXXP motif 1 (PubMed:10892653). SH3 domain 2 preferentially binds Dscam1 polyproline tract (PubMed:10892653). SH3 domain 3 preferentially binds Dscam1 PXXP motif 2 (PubMed:10892653). Interaction of the SH2 domain with Dscam1 requires Dscam1 to be phosphorylated (PubMed:10892653). InR can interact with either the SH3 domains (all 3 domains required) or the SH2 domain (PubMed:12702880). Only SH3 domain 2 binding activity is essential, but not sufficient, for R cell projection targeting (PubMed:9482841). SH3 domain 1, SH3 domain 2 and the SH2 binding activities contribute to R cell targeting but have redundant functions (PubMed:9482841). SH3 domain 2 and the SH2 domain are both essential for targeting and patterning of inner optic ganglion neurons (PubMed:9482841). SH3 domain 2 is necessary and sufficient for binding to Pak (PubMed:10399914).</text>
</comment>
<comment type="PTM">
    <text evidence="7">Phosphorylated by Src42A and possibly by other tyrosine kinases (PubMed:12014990). Constitutively dephosphorylated by its binding partner Ptp61F (PubMed:12014990).</text>
</comment>
<comment type="disruption phenotype">
    <text evidence="4 5 6 10 12">Pupal lethal with some adult escapers that are sluggish and uncoordinated and die within a few days of eclosion (PubMed:8646773). Defects in R cell projection patterns with abnormal axon targeting and excessive axon crossing over and bundling (fasciculation) (PubMed:8646773, PubMed:9482841). Identical to Pak mutant, R cells fail to find their proper targets within the medulla neuropil, fail to arborise properly within the lamina and medulla neuropils and terminate as thick blunt ended fascicles (PubMed:10399914). Disruption of neuropil structures in the inner optic ganglia (PubMed:9482841). Slight disorganization of motorneuron axons, probably caused by intermittent defasiculation, and some abnormal axon crossing of the midline (PubMed:10068645). Very minor defect in muscle organization (PubMed:10068645). Delayed neuromuscular synapse formation of the RP3 motorneuron, but not of other motorneurons of the SNb nerve, identical to lbm/late bloomer mutant phenotype (PubMed:10068645). Defective Bolwig's nerve axon targeting during Bolwig's organ development (PubMed:10892653).</text>
</comment>
<comment type="miscellaneous">
    <text evidence="13">Dreadlocks is named for the distinctive appearance of defective photoreceptor cell (R cell) axon projection pattern caused by excessive bundling of axons in loss of function mutants.</text>
</comment>
<evidence type="ECO:0000255" key="1">
    <source>
        <dbReference type="PROSITE-ProRule" id="PRU00191"/>
    </source>
</evidence>
<evidence type="ECO:0000255" key="2">
    <source>
        <dbReference type="PROSITE-ProRule" id="PRU00192"/>
    </source>
</evidence>
<evidence type="ECO:0000256" key="3">
    <source>
        <dbReference type="SAM" id="MobiDB-lite"/>
    </source>
</evidence>
<evidence type="ECO:0000269" key="4">
    <source>
    </source>
</evidence>
<evidence type="ECO:0000269" key="5">
    <source>
    </source>
</evidence>
<evidence type="ECO:0000269" key="6">
    <source>
    </source>
</evidence>
<evidence type="ECO:0000269" key="7">
    <source>
    </source>
</evidence>
<evidence type="ECO:0000269" key="8">
    <source>
    </source>
</evidence>
<evidence type="ECO:0000269" key="9">
    <source>
    </source>
</evidence>
<evidence type="ECO:0000269" key="10">
    <source>
    </source>
</evidence>
<evidence type="ECO:0000269" key="11">
    <source>
    </source>
</evidence>
<evidence type="ECO:0000269" key="12">
    <source>
    </source>
</evidence>
<evidence type="ECO:0000303" key="13">
    <source>
    </source>
</evidence>
<evidence type="ECO:0000305" key="14"/>
<evidence type="ECO:0000312" key="15">
    <source>
        <dbReference type="EMBL" id="AAB05596.1"/>
    </source>
</evidence>
<evidence type="ECO:0000312" key="16">
    <source>
        <dbReference type="EMBL" id="AAF51450.2"/>
    </source>
</evidence>
<evidence type="ECO:0000312" key="17">
    <source>
        <dbReference type="EMBL" id="AAM50268.1"/>
    </source>
</evidence>
<evidence type="ECO:0000312" key="18">
    <source>
        <dbReference type="FlyBase" id="FBgn0010583"/>
    </source>
</evidence>
<evidence type="ECO:0000312" key="19">
    <source>
        <dbReference type="Proteomes" id="UP000000803"/>
    </source>
</evidence>
<protein>
    <recommendedName>
        <fullName evidence="14">SH2/SH3 adapter protein dreadlocks</fullName>
    </recommendedName>
</protein>
<sequence>MLEHPQRFVRNIPDSSASSQQYPQQQQHPPQLPQHQNLNLNQNQNLNQNQIYQYRPQVPVPVPGSPAHHQRHSSLSQQQQLHHHRTLSTASSCSAQHKSVTFGQPALDCGGNGSGSANGSGSGNSSSGSAAGNAGTQSMAGNMKHGKSQDDVCYVVAKYDYAAQGAQELDLRKNERYLLLDDSKHWWRVQNSRNQSGYVPSNYVKKEKPSLFDSIKKKVKKGSGSKTLPNCSPSRQVESPTMSRRLPPDPAEAIGTAVVKYNYQAQQPDELSLTKGTRILILEKSNDGWWRGQSGNSVGWFPSNYTTEDCDNDGEIHTYAMAENVLDIVVALYSFTSNNDQELSFEKGDRLEIVDRPASDPDWYKARNNQGQVGLVPRNYLQELNDYLATPYRNASASAGNGNGGGSNGGAGGGGGNDSMERRNEGNKPAAQSSGQPIERPNLAGKSWYYGAITRSQCDTVLNGHGHDGDFLIRDSETNMGDYSVSLKAPGRNKHFRVHVEQNMYCIGQRKFHSLDQLVDHYQRAPIYTNKQGEKLYLVRSLPKANGT</sequence>
<dbReference type="EMBL" id="U57816">
    <property type="protein sequence ID" value="AAB05596.1"/>
    <property type="molecule type" value="mRNA"/>
</dbReference>
<dbReference type="EMBL" id="AE014134">
    <property type="protein sequence ID" value="AAF51449.1"/>
    <property type="molecule type" value="Genomic_DNA"/>
</dbReference>
<dbReference type="EMBL" id="AE014134">
    <property type="protein sequence ID" value="AAF51450.2"/>
    <property type="molecule type" value="Genomic_DNA"/>
</dbReference>
<dbReference type="EMBL" id="AE014134">
    <property type="protein sequence ID" value="AAN10486.1"/>
    <property type="molecule type" value="Genomic_DNA"/>
</dbReference>
<dbReference type="EMBL" id="AE014134">
    <property type="protein sequence ID" value="AGB92382.1"/>
    <property type="molecule type" value="Genomic_DNA"/>
</dbReference>
<dbReference type="EMBL" id="AY119614">
    <property type="protein sequence ID" value="AAM50268.1"/>
    <property type="molecule type" value="mRNA"/>
</dbReference>
<dbReference type="RefSeq" id="NP_001259845.1">
    <molecule id="Q8IPW2-2"/>
    <property type="nucleotide sequence ID" value="NM_001272916.1"/>
</dbReference>
<dbReference type="RefSeq" id="NP_476976.1">
    <molecule id="Q8IPW2-1"/>
    <property type="nucleotide sequence ID" value="NM_057628.4"/>
</dbReference>
<dbReference type="RefSeq" id="NP_722657.1">
    <molecule id="Q8IPW2-2"/>
    <property type="nucleotide sequence ID" value="NM_164389.2"/>
</dbReference>
<dbReference type="RefSeq" id="NP_722658.1">
    <molecule id="Q8IPW2-2"/>
    <property type="nucleotide sequence ID" value="NM_164390.2"/>
</dbReference>
<dbReference type="SMR" id="Q8IPW2"/>
<dbReference type="IntAct" id="Q8IPW2">
    <property type="interactions" value="12"/>
</dbReference>
<dbReference type="MINT" id="Q8IPW2"/>
<dbReference type="STRING" id="7227.FBpp0077679"/>
<dbReference type="PaxDb" id="7227-FBpp0077679"/>
<dbReference type="EnsemblMetazoa" id="FBtr0078013">
    <molecule id="Q8IPW2-1"/>
    <property type="protein sequence ID" value="FBpp0077678"/>
    <property type="gene ID" value="FBgn0010583"/>
</dbReference>
<dbReference type="EnsemblMetazoa" id="FBtr0078014">
    <molecule id="Q8IPW2-2"/>
    <property type="protein sequence ID" value="FBpp0077679"/>
    <property type="gene ID" value="FBgn0010583"/>
</dbReference>
<dbReference type="EnsemblMetazoa" id="FBtr0078015">
    <molecule id="Q8IPW2-2"/>
    <property type="protein sequence ID" value="FBpp0077680"/>
    <property type="gene ID" value="FBgn0010583"/>
</dbReference>
<dbReference type="EnsemblMetazoa" id="FBtr0332973">
    <molecule id="Q8IPW2-2"/>
    <property type="protein sequence ID" value="FBpp0305189"/>
    <property type="gene ID" value="FBgn0010583"/>
</dbReference>
<dbReference type="GeneID" id="33262"/>
<dbReference type="KEGG" id="dme:Dmel_CG3727"/>
<dbReference type="UCSC" id="CG3727-RA">
    <molecule id="Q8IPW2-2"/>
    <property type="organism name" value="d. melanogaster"/>
</dbReference>
<dbReference type="AGR" id="FB:FBgn0010583"/>
<dbReference type="CTD" id="33262"/>
<dbReference type="FlyBase" id="FBgn0010583">
    <property type="gene designation" value="dock"/>
</dbReference>
<dbReference type="VEuPathDB" id="VectorBase:FBgn0010583"/>
<dbReference type="eggNOG" id="KOG4226">
    <property type="taxonomic scope" value="Eukaryota"/>
</dbReference>
<dbReference type="GeneTree" id="ENSGT00940000167681"/>
<dbReference type="HOGENOM" id="CLU_025160_1_0_1"/>
<dbReference type="InParanoid" id="Q9VPU1"/>
<dbReference type="OMA" id="SYEPQRE"/>
<dbReference type="OrthoDB" id="26539at2759"/>
<dbReference type="Reactome" id="R-DME-186763">
    <property type="pathway name" value="Downstream signal transduction"/>
</dbReference>
<dbReference type="Reactome" id="R-DME-202433">
    <property type="pathway name" value="Generation of second messenger molecules"/>
</dbReference>
<dbReference type="Reactome" id="R-DME-2029482">
    <property type="pathway name" value="Regulation of actin dynamics for phagocytic cup formation"/>
</dbReference>
<dbReference type="Reactome" id="R-DME-373753">
    <property type="pathway name" value="Nephrin family interactions"/>
</dbReference>
<dbReference type="Reactome" id="R-DME-3928664">
    <property type="pathway name" value="Ephrin signaling"/>
</dbReference>
<dbReference type="Reactome" id="R-DME-418885">
    <property type="pathway name" value="DCC mediated attractive signaling"/>
</dbReference>
<dbReference type="Reactome" id="R-DME-4420097">
    <property type="pathway name" value="VEGFA-VEGFR2 Pathway"/>
</dbReference>
<dbReference type="Reactome" id="R-DME-5663213">
    <property type="pathway name" value="RHO GTPases Activate WASPs and WAVEs"/>
</dbReference>
<dbReference type="Reactome" id="R-DME-9013420">
    <property type="pathway name" value="RHOU GTPase cycle"/>
</dbReference>
<dbReference type="Reactome" id="R-DME-9013424">
    <property type="pathway name" value="RHOV GTPase cycle"/>
</dbReference>
<dbReference type="Reactome" id="R-DME-9833482">
    <property type="pathway name" value="PKR-mediated signaling"/>
</dbReference>
<dbReference type="BioGRID-ORCS" id="33262">
    <property type="hits" value="0 hits in 3 CRISPR screens"/>
</dbReference>
<dbReference type="ChiTaRS" id="dock">
    <property type="organism name" value="fly"/>
</dbReference>
<dbReference type="GenomeRNAi" id="33262"/>
<dbReference type="PRO" id="PR:Q8IPW2"/>
<dbReference type="Proteomes" id="UP000000803">
    <property type="component" value="Chromosome 2L"/>
</dbReference>
<dbReference type="Bgee" id="FBgn0010583">
    <property type="expression patterns" value="Expressed in T neuron T5b (Drosophila) in embryonic/larval optic lobe (Drosophila) and 192 other cell types or tissues"/>
</dbReference>
<dbReference type="ExpressionAtlas" id="Q8IPW2">
    <property type="expression patterns" value="baseline and differential"/>
</dbReference>
<dbReference type="GO" id="GO:0005829">
    <property type="term" value="C:cytosol"/>
    <property type="evidence" value="ECO:0000304"/>
    <property type="project" value="Reactome"/>
</dbReference>
<dbReference type="GO" id="GO:0030426">
    <property type="term" value="C:growth cone"/>
    <property type="evidence" value="ECO:0007669"/>
    <property type="project" value="UniProtKB-SubCell"/>
</dbReference>
<dbReference type="GO" id="GO:0043204">
    <property type="term" value="C:perikaryon"/>
    <property type="evidence" value="ECO:0007669"/>
    <property type="project" value="UniProtKB-SubCell"/>
</dbReference>
<dbReference type="GO" id="GO:0050839">
    <property type="term" value="F:cell adhesion molecule binding"/>
    <property type="evidence" value="ECO:0000353"/>
    <property type="project" value="FlyBase"/>
</dbReference>
<dbReference type="GO" id="GO:0005158">
    <property type="term" value="F:insulin receptor binding"/>
    <property type="evidence" value="ECO:0000353"/>
    <property type="project" value="FlyBase"/>
</dbReference>
<dbReference type="GO" id="GO:0019901">
    <property type="term" value="F:protein kinase binding"/>
    <property type="evidence" value="ECO:0000353"/>
    <property type="project" value="FlyBase"/>
</dbReference>
<dbReference type="GO" id="GO:0030674">
    <property type="term" value="F:protein-macromolecule adaptor activity"/>
    <property type="evidence" value="ECO:0000353"/>
    <property type="project" value="FlyBase"/>
</dbReference>
<dbReference type="GO" id="GO:0007411">
    <property type="term" value="P:axon guidance"/>
    <property type="evidence" value="ECO:0000315"/>
    <property type="project" value="FlyBase"/>
</dbReference>
<dbReference type="GO" id="GO:0007520">
    <property type="term" value="P:myoblast fusion"/>
    <property type="evidence" value="ECO:0000316"/>
    <property type="project" value="FlyBase"/>
</dbReference>
<dbReference type="GO" id="GO:0046627">
    <property type="term" value="P:negative regulation of insulin receptor signaling pathway"/>
    <property type="evidence" value="ECO:0000316"/>
    <property type="project" value="FlyBase"/>
</dbReference>
<dbReference type="CDD" id="cd09943">
    <property type="entry name" value="SH2_Nck_family"/>
    <property type="match status" value="1"/>
</dbReference>
<dbReference type="CDD" id="cd11765">
    <property type="entry name" value="SH3_Nck_1"/>
    <property type="match status" value="1"/>
</dbReference>
<dbReference type="CDD" id="cd11766">
    <property type="entry name" value="SH3_Nck_2"/>
    <property type="match status" value="1"/>
</dbReference>
<dbReference type="CDD" id="cd11767">
    <property type="entry name" value="SH3_Nck_3"/>
    <property type="match status" value="1"/>
</dbReference>
<dbReference type="FunFam" id="2.30.30.40:FF:000110">
    <property type="entry name" value="Cytoplasmic protein"/>
    <property type="match status" value="1"/>
</dbReference>
<dbReference type="FunFam" id="3.30.505.10:FF:000027">
    <property type="entry name" value="Cytoplasmic protein nck1"/>
    <property type="match status" value="1"/>
</dbReference>
<dbReference type="FunFam" id="2.30.30.40:FF:000280">
    <property type="entry name" value="Dreadlocks, isoform A"/>
    <property type="match status" value="1"/>
</dbReference>
<dbReference type="Gene3D" id="3.30.505.10">
    <property type="entry name" value="SH2 domain"/>
    <property type="match status" value="1"/>
</dbReference>
<dbReference type="Gene3D" id="2.30.30.40">
    <property type="entry name" value="SH3 Domains"/>
    <property type="match status" value="3"/>
</dbReference>
<dbReference type="InterPro" id="IPR000980">
    <property type="entry name" value="SH2"/>
</dbReference>
<dbReference type="InterPro" id="IPR036860">
    <property type="entry name" value="SH2_dom_sf"/>
</dbReference>
<dbReference type="InterPro" id="IPR036028">
    <property type="entry name" value="SH3-like_dom_sf"/>
</dbReference>
<dbReference type="InterPro" id="IPR001452">
    <property type="entry name" value="SH3_domain"/>
</dbReference>
<dbReference type="InterPro" id="IPR051184">
    <property type="entry name" value="Tyrosine-phos_adapter"/>
</dbReference>
<dbReference type="PANTHER" id="PTHR19969:SF14">
    <property type="entry name" value="DREADLOCKS, ISOFORM B"/>
    <property type="match status" value="1"/>
</dbReference>
<dbReference type="PANTHER" id="PTHR19969">
    <property type="entry name" value="SH2-SH3 ADAPTOR PROTEIN-RELATED"/>
    <property type="match status" value="1"/>
</dbReference>
<dbReference type="Pfam" id="PF00017">
    <property type="entry name" value="SH2"/>
    <property type="match status" value="1"/>
</dbReference>
<dbReference type="Pfam" id="PF00018">
    <property type="entry name" value="SH3_1"/>
    <property type="match status" value="3"/>
</dbReference>
<dbReference type="PRINTS" id="PR00401">
    <property type="entry name" value="SH2DOMAIN"/>
</dbReference>
<dbReference type="PRINTS" id="PR00452">
    <property type="entry name" value="SH3DOMAIN"/>
</dbReference>
<dbReference type="SMART" id="SM00252">
    <property type="entry name" value="SH2"/>
    <property type="match status" value="1"/>
</dbReference>
<dbReference type="SMART" id="SM00326">
    <property type="entry name" value="SH3"/>
    <property type="match status" value="3"/>
</dbReference>
<dbReference type="SUPFAM" id="SSF55550">
    <property type="entry name" value="SH2 domain"/>
    <property type="match status" value="1"/>
</dbReference>
<dbReference type="SUPFAM" id="SSF50044">
    <property type="entry name" value="SH3-domain"/>
    <property type="match status" value="3"/>
</dbReference>
<dbReference type="PROSITE" id="PS50001">
    <property type="entry name" value="SH2"/>
    <property type="match status" value="1"/>
</dbReference>
<dbReference type="PROSITE" id="PS50002">
    <property type="entry name" value="SH3"/>
    <property type="match status" value="3"/>
</dbReference>
<keyword id="KW-0025">Alternative splicing</keyword>
<keyword id="KW-0966">Cell projection</keyword>
<keyword id="KW-0524">Neurogenesis</keyword>
<keyword id="KW-0597">Phosphoprotein</keyword>
<keyword id="KW-1185">Reference proteome</keyword>
<keyword id="KW-0727">SH2 domain</keyword>
<keyword id="KW-0728">SH3 domain</keyword>
<accession>Q8IPW2</accession>
<accession>Q24218</accession>
<accession>Q9VPU1</accession>